<evidence type="ECO:0000250" key="1"/>
<evidence type="ECO:0000250" key="2">
    <source>
        <dbReference type="UniProtKB" id="Q6Y288"/>
    </source>
</evidence>
<evidence type="ECO:0000255" key="3"/>
<evidence type="ECO:0000255" key="4">
    <source>
        <dbReference type="PROSITE-ProRule" id="PRU10138"/>
    </source>
</evidence>
<evidence type="ECO:0000303" key="5">
    <source>
    </source>
</evidence>
<evidence type="ECO:0000305" key="6"/>
<evidence type="ECO:0000312" key="7">
    <source>
        <dbReference type="MGI" id="MGI:2685903"/>
    </source>
</evidence>
<protein>
    <recommendedName>
        <fullName>Beta-1,3-glucosyltransferase</fullName>
        <shortName>Beta3Glc-T</shortName>
        <ecNumber>2.4.1.-</ecNumber>
    </recommendedName>
    <alternativeName>
        <fullName evidence="7">Beta 3-glucosyltransferase</fullName>
    </alternativeName>
    <alternativeName>
        <fullName>Beta-3-glycosyltransferase-like</fullName>
    </alternativeName>
</protein>
<gene>
    <name evidence="7" type="primary">B3glct</name>
    <name evidence="2" type="synonym">B3galtl</name>
    <name type="synonym">Gm1057</name>
</gene>
<feature type="chain" id="PRO_0000252400" description="Beta-1,3-glucosyltransferase">
    <location>
        <begin position="1"/>
        <end position="489"/>
    </location>
</feature>
<feature type="topological domain" description="Cytoplasmic" evidence="3">
    <location>
        <position position="1"/>
    </location>
</feature>
<feature type="transmembrane region" description="Helical; Signal-anchor for type II membrane protein" evidence="3">
    <location>
        <begin position="2"/>
        <end position="22"/>
    </location>
</feature>
<feature type="topological domain" description="Lumenal" evidence="3">
    <location>
        <begin position="23"/>
        <end position="489"/>
    </location>
</feature>
<feature type="short sequence motif" description="Prevents secretion from ER" evidence="4">
    <location>
        <begin position="486"/>
        <end position="489"/>
    </location>
</feature>
<feature type="glycosylation site" description="N-linked (GlcNAc...) asparagine" evidence="3">
    <location>
        <position position="78"/>
    </location>
</feature>
<feature type="splice variant" id="VSP_020936" description="In isoform 2." evidence="5">
    <location>
        <begin position="1"/>
        <end position="386"/>
    </location>
</feature>
<feature type="sequence conflict" description="In Ref. 1; BAF02833." evidence="6" ref="1">
    <original>L</original>
    <variation>I</variation>
    <location>
        <position position="128"/>
    </location>
</feature>
<feature type="sequence conflict" description="In Ref. 1; BAF02833." evidence="6" ref="1">
    <original>V</original>
    <variation>I</variation>
    <location>
        <position position="253"/>
    </location>
</feature>
<organism>
    <name type="scientific">Mus musculus</name>
    <name type="common">Mouse</name>
    <dbReference type="NCBI Taxonomy" id="10090"/>
    <lineage>
        <taxon>Eukaryota</taxon>
        <taxon>Metazoa</taxon>
        <taxon>Chordata</taxon>
        <taxon>Craniata</taxon>
        <taxon>Vertebrata</taxon>
        <taxon>Euteleostomi</taxon>
        <taxon>Mammalia</taxon>
        <taxon>Eutheria</taxon>
        <taxon>Euarchontoglires</taxon>
        <taxon>Glires</taxon>
        <taxon>Rodentia</taxon>
        <taxon>Myomorpha</taxon>
        <taxon>Muroidea</taxon>
        <taxon>Muridae</taxon>
        <taxon>Murinae</taxon>
        <taxon>Mus</taxon>
        <taxon>Mus</taxon>
    </lineage>
</organism>
<comment type="function">
    <text evidence="1">O-glucosyltransferase that transfers glucose toward fucose with a beta-1,3 linkage. Specifically glucosylates O-linked fucosylglycan on TSP type-1 domains of proteins, thereby contributing to elongation of O-fucosylglycan (By similarity).</text>
</comment>
<comment type="pathway">
    <text>Protein modification; protein glycosylation.</text>
</comment>
<comment type="subcellular location">
    <subcellularLocation>
        <location evidence="4">Endoplasmic reticulum membrane</location>
        <topology evidence="1">Single-pass type II membrane protein</topology>
    </subcellularLocation>
</comment>
<comment type="alternative products">
    <event type="alternative splicing"/>
    <isoform>
        <id>Q8BHT6-1</id>
        <name>1</name>
        <sequence type="displayed"/>
    </isoform>
    <isoform>
        <id>Q8BHT6-2</id>
        <name>2</name>
        <sequence type="described" ref="VSP_020936"/>
    </isoform>
</comment>
<comment type="similarity">
    <text evidence="6">Belongs to the glycosyltransferase 31 family.</text>
</comment>
<proteinExistence type="evidence at protein level"/>
<reference key="1">
    <citation type="journal article" date="2006" name="Glycobiology">
        <title>Molecular cloning and characterization of a novel human beta1,3-glucosyltransferase, which is localized at the endoplasmic reticulum and glucosylates O-linked fucosylglycan on thrombospondin type 1 repeat domain.</title>
        <authorList>
            <person name="Sato T."/>
            <person name="Sato M."/>
            <person name="Kiyohara K."/>
            <person name="Sogabe M."/>
            <person name="Shikanai T."/>
            <person name="Kikuchi N."/>
            <person name="Togayachi A."/>
            <person name="Ishida H."/>
            <person name="Ito H."/>
            <person name="Kameyama A."/>
            <person name="Gotoh M."/>
            <person name="Narimatsu H."/>
        </authorList>
    </citation>
    <scope>NUCLEOTIDE SEQUENCE [MRNA] (ISOFORM 1)</scope>
</reference>
<reference key="2">
    <citation type="journal article" date="2009" name="PLoS Biol.">
        <title>Lineage-specific biology revealed by a finished genome assembly of the mouse.</title>
        <authorList>
            <person name="Church D.M."/>
            <person name="Goodstadt L."/>
            <person name="Hillier L.W."/>
            <person name="Zody M.C."/>
            <person name="Goldstein S."/>
            <person name="She X."/>
            <person name="Bult C.J."/>
            <person name="Agarwala R."/>
            <person name="Cherry J.L."/>
            <person name="DiCuccio M."/>
            <person name="Hlavina W."/>
            <person name="Kapustin Y."/>
            <person name="Meric P."/>
            <person name="Maglott D."/>
            <person name="Birtle Z."/>
            <person name="Marques A.C."/>
            <person name="Graves T."/>
            <person name="Zhou S."/>
            <person name="Teague B."/>
            <person name="Potamousis K."/>
            <person name="Churas C."/>
            <person name="Place M."/>
            <person name="Herschleb J."/>
            <person name="Runnheim R."/>
            <person name="Forrest D."/>
            <person name="Amos-Landgraf J."/>
            <person name="Schwartz D.C."/>
            <person name="Cheng Z."/>
            <person name="Lindblad-Toh K."/>
            <person name="Eichler E.E."/>
            <person name="Ponting C.P."/>
        </authorList>
    </citation>
    <scope>NUCLEOTIDE SEQUENCE [LARGE SCALE GENOMIC DNA]</scope>
    <source>
        <strain>C57BL/6J</strain>
    </source>
</reference>
<reference key="3">
    <citation type="journal article" date="2004" name="Genome Res.">
        <title>The status, quality, and expansion of the NIH full-length cDNA project: the Mammalian Gene Collection (MGC).</title>
        <authorList>
            <consortium name="The MGC Project Team"/>
        </authorList>
    </citation>
    <scope>NUCLEOTIDE SEQUENCE [LARGE SCALE MRNA] (ISOFORM 2)</scope>
</reference>
<reference key="4">
    <citation type="journal article" date="2005" name="Science">
        <title>The transcriptional landscape of the mammalian genome.</title>
        <authorList>
            <person name="Carninci P."/>
            <person name="Kasukawa T."/>
            <person name="Katayama S."/>
            <person name="Gough J."/>
            <person name="Frith M.C."/>
            <person name="Maeda N."/>
            <person name="Oyama R."/>
            <person name="Ravasi T."/>
            <person name="Lenhard B."/>
            <person name="Wells C."/>
            <person name="Kodzius R."/>
            <person name="Shimokawa K."/>
            <person name="Bajic V.B."/>
            <person name="Brenner S.E."/>
            <person name="Batalov S."/>
            <person name="Forrest A.R."/>
            <person name="Zavolan M."/>
            <person name="Davis M.J."/>
            <person name="Wilming L.G."/>
            <person name="Aidinis V."/>
            <person name="Allen J.E."/>
            <person name="Ambesi-Impiombato A."/>
            <person name="Apweiler R."/>
            <person name="Aturaliya R.N."/>
            <person name="Bailey T.L."/>
            <person name="Bansal M."/>
            <person name="Baxter L."/>
            <person name="Beisel K.W."/>
            <person name="Bersano T."/>
            <person name="Bono H."/>
            <person name="Chalk A.M."/>
            <person name="Chiu K.P."/>
            <person name="Choudhary V."/>
            <person name="Christoffels A."/>
            <person name="Clutterbuck D.R."/>
            <person name="Crowe M.L."/>
            <person name="Dalla E."/>
            <person name="Dalrymple B.P."/>
            <person name="de Bono B."/>
            <person name="Della Gatta G."/>
            <person name="di Bernardo D."/>
            <person name="Down T."/>
            <person name="Engstrom P."/>
            <person name="Fagiolini M."/>
            <person name="Faulkner G."/>
            <person name="Fletcher C.F."/>
            <person name="Fukushima T."/>
            <person name="Furuno M."/>
            <person name="Futaki S."/>
            <person name="Gariboldi M."/>
            <person name="Georgii-Hemming P."/>
            <person name="Gingeras T.R."/>
            <person name="Gojobori T."/>
            <person name="Green R.E."/>
            <person name="Gustincich S."/>
            <person name="Harbers M."/>
            <person name="Hayashi Y."/>
            <person name="Hensch T.K."/>
            <person name="Hirokawa N."/>
            <person name="Hill D."/>
            <person name="Huminiecki L."/>
            <person name="Iacono M."/>
            <person name="Ikeo K."/>
            <person name="Iwama A."/>
            <person name="Ishikawa T."/>
            <person name="Jakt M."/>
            <person name="Kanapin A."/>
            <person name="Katoh M."/>
            <person name="Kawasawa Y."/>
            <person name="Kelso J."/>
            <person name="Kitamura H."/>
            <person name="Kitano H."/>
            <person name="Kollias G."/>
            <person name="Krishnan S.P."/>
            <person name="Kruger A."/>
            <person name="Kummerfeld S.K."/>
            <person name="Kurochkin I.V."/>
            <person name="Lareau L.F."/>
            <person name="Lazarevic D."/>
            <person name="Lipovich L."/>
            <person name="Liu J."/>
            <person name="Liuni S."/>
            <person name="McWilliam S."/>
            <person name="Madan Babu M."/>
            <person name="Madera M."/>
            <person name="Marchionni L."/>
            <person name="Matsuda H."/>
            <person name="Matsuzawa S."/>
            <person name="Miki H."/>
            <person name="Mignone F."/>
            <person name="Miyake S."/>
            <person name="Morris K."/>
            <person name="Mottagui-Tabar S."/>
            <person name="Mulder N."/>
            <person name="Nakano N."/>
            <person name="Nakauchi H."/>
            <person name="Ng P."/>
            <person name="Nilsson R."/>
            <person name="Nishiguchi S."/>
            <person name="Nishikawa S."/>
            <person name="Nori F."/>
            <person name="Ohara O."/>
            <person name="Okazaki Y."/>
            <person name="Orlando V."/>
            <person name="Pang K.C."/>
            <person name="Pavan W.J."/>
            <person name="Pavesi G."/>
            <person name="Pesole G."/>
            <person name="Petrovsky N."/>
            <person name="Piazza S."/>
            <person name="Reed J."/>
            <person name="Reid J.F."/>
            <person name="Ring B.Z."/>
            <person name="Ringwald M."/>
            <person name="Rost B."/>
            <person name="Ruan Y."/>
            <person name="Salzberg S.L."/>
            <person name="Sandelin A."/>
            <person name="Schneider C."/>
            <person name="Schoenbach C."/>
            <person name="Sekiguchi K."/>
            <person name="Semple C.A."/>
            <person name="Seno S."/>
            <person name="Sessa L."/>
            <person name="Sheng Y."/>
            <person name="Shibata Y."/>
            <person name="Shimada H."/>
            <person name="Shimada K."/>
            <person name="Silva D."/>
            <person name="Sinclair B."/>
            <person name="Sperling S."/>
            <person name="Stupka E."/>
            <person name="Sugiura K."/>
            <person name="Sultana R."/>
            <person name="Takenaka Y."/>
            <person name="Taki K."/>
            <person name="Tammoja K."/>
            <person name="Tan S.L."/>
            <person name="Tang S."/>
            <person name="Taylor M.S."/>
            <person name="Tegner J."/>
            <person name="Teichmann S.A."/>
            <person name="Ueda H.R."/>
            <person name="van Nimwegen E."/>
            <person name="Verardo R."/>
            <person name="Wei C.L."/>
            <person name="Yagi K."/>
            <person name="Yamanishi H."/>
            <person name="Zabarovsky E."/>
            <person name="Zhu S."/>
            <person name="Zimmer A."/>
            <person name="Hide W."/>
            <person name="Bult C."/>
            <person name="Grimmond S.M."/>
            <person name="Teasdale R.D."/>
            <person name="Liu E.T."/>
            <person name="Brusic V."/>
            <person name="Quackenbush J."/>
            <person name="Wahlestedt C."/>
            <person name="Mattick J.S."/>
            <person name="Hume D.A."/>
            <person name="Kai C."/>
            <person name="Sasaki D."/>
            <person name="Tomaru Y."/>
            <person name="Fukuda S."/>
            <person name="Kanamori-Katayama M."/>
            <person name="Suzuki M."/>
            <person name="Aoki J."/>
            <person name="Arakawa T."/>
            <person name="Iida J."/>
            <person name="Imamura K."/>
            <person name="Itoh M."/>
            <person name="Kato T."/>
            <person name="Kawaji H."/>
            <person name="Kawagashira N."/>
            <person name="Kawashima T."/>
            <person name="Kojima M."/>
            <person name="Kondo S."/>
            <person name="Konno H."/>
            <person name="Nakano K."/>
            <person name="Ninomiya N."/>
            <person name="Nishio T."/>
            <person name="Okada M."/>
            <person name="Plessy C."/>
            <person name="Shibata K."/>
            <person name="Shiraki T."/>
            <person name="Suzuki S."/>
            <person name="Tagami M."/>
            <person name="Waki K."/>
            <person name="Watahiki A."/>
            <person name="Okamura-Oho Y."/>
            <person name="Suzuki H."/>
            <person name="Kawai J."/>
            <person name="Hayashizaki Y."/>
        </authorList>
    </citation>
    <scope>NUCLEOTIDE SEQUENCE [LARGE SCALE MRNA] OF 1-352 (ISOFORM 1)</scope>
    <source>
        <strain>C57BL/6J</strain>
    </source>
</reference>
<reference key="5">
    <citation type="journal article" date="2010" name="Cell">
        <title>A tissue-specific atlas of mouse protein phosphorylation and expression.</title>
        <authorList>
            <person name="Huttlin E.L."/>
            <person name="Jedrychowski M.P."/>
            <person name="Elias J.E."/>
            <person name="Goswami T."/>
            <person name="Rad R."/>
            <person name="Beausoleil S.A."/>
            <person name="Villen J."/>
            <person name="Haas W."/>
            <person name="Sowa M.E."/>
            <person name="Gygi S.P."/>
        </authorList>
    </citation>
    <scope>IDENTIFICATION BY MASS SPECTROMETRY [LARGE SCALE ANALYSIS]</scope>
    <source>
        <tissue>Spleen</tissue>
    </source>
</reference>
<keyword id="KW-0025">Alternative splicing</keyword>
<keyword id="KW-0119">Carbohydrate metabolism</keyword>
<keyword id="KW-0256">Endoplasmic reticulum</keyword>
<keyword id="KW-0294">Fucose metabolism</keyword>
<keyword id="KW-0325">Glycoprotein</keyword>
<keyword id="KW-0328">Glycosyltransferase</keyword>
<keyword id="KW-0472">Membrane</keyword>
<keyword id="KW-1185">Reference proteome</keyword>
<keyword id="KW-0735">Signal-anchor</keyword>
<keyword id="KW-0808">Transferase</keyword>
<keyword id="KW-0812">Transmembrane</keyword>
<keyword id="KW-1133">Transmembrane helix</keyword>
<name>B3GLT_MOUSE</name>
<dbReference type="EC" id="2.4.1.-"/>
<dbReference type="EMBL" id="AB253762">
    <property type="protein sequence ID" value="BAF02833.1"/>
    <property type="molecule type" value="mRNA"/>
</dbReference>
<dbReference type="EMBL" id="AC114342">
    <property type="status" value="NOT_ANNOTATED_CDS"/>
    <property type="molecule type" value="Genomic_DNA"/>
</dbReference>
<dbReference type="EMBL" id="BC115781">
    <property type="protein sequence ID" value="AAI15782.1"/>
    <property type="molecule type" value="mRNA"/>
</dbReference>
<dbReference type="EMBL" id="BC117522">
    <property type="protein sequence ID" value="AAI17523.1"/>
    <property type="molecule type" value="mRNA"/>
</dbReference>
<dbReference type="EMBL" id="AK089440">
    <property type="protein sequence ID" value="BAC40885.1"/>
    <property type="molecule type" value="mRNA"/>
</dbReference>
<dbReference type="CCDS" id="CCDS39410.1">
    <molecule id="Q8BHT6-1"/>
</dbReference>
<dbReference type="RefSeq" id="NP_001074673.1">
    <molecule id="Q8BHT6-1"/>
    <property type="nucleotide sequence ID" value="NM_001081204.2"/>
</dbReference>
<dbReference type="SMR" id="Q8BHT6"/>
<dbReference type="BioGRID" id="238051">
    <property type="interactions" value="2"/>
</dbReference>
<dbReference type="FunCoup" id="Q8BHT6">
    <property type="interactions" value="84"/>
</dbReference>
<dbReference type="STRING" id="10090.ENSMUSP00000097972"/>
<dbReference type="CAZy" id="GT31">
    <property type="family name" value="Glycosyltransferase Family 31"/>
</dbReference>
<dbReference type="GlyConnect" id="2149">
    <property type="glycosylation" value="3 N-Linked glycans (1 site)"/>
</dbReference>
<dbReference type="GlyCosmos" id="Q8BHT6">
    <property type="glycosylation" value="2 sites, 3 glycans"/>
</dbReference>
<dbReference type="GlyGen" id="Q8BHT6">
    <property type="glycosylation" value="2 sites, 5 N-linked glycans (2 sites)"/>
</dbReference>
<dbReference type="iPTMnet" id="Q8BHT6"/>
<dbReference type="PhosphoSitePlus" id="Q8BHT6"/>
<dbReference type="PaxDb" id="10090-ENSMUSP00000097972"/>
<dbReference type="PeptideAtlas" id="Q8BHT6"/>
<dbReference type="ProteomicsDB" id="277146">
    <molecule id="Q8BHT6-1"/>
</dbReference>
<dbReference type="ProteomicsDB" id="277147">
    <molecule id="Q8BHT6-2"/>
</dbReference>
<dbReference type="Pumba" id="Q8BHT6"/>
<dbReference type="Antibodypedia" id="2712">
    <property type="antibodies" value="106 antibodies from 25 providers"/>
</dbReference>
<dbReference type="Ensembl" id="ENSMUST00000100404.6">
    <molecule id="Q8BHT6-1"/>
    <property type="protein sequence ID" value="ENSMUSP00000097972.4"/>
    <property type="gene ID" value="ENSMUSG00000051950.11"/>
</dbReference>
<dbReference type="GeneID" id="381694"/>
<dbReference type="KEGG" id="mmu:381694"/>
<dbReference type="UCSC" id="uc009aqc.1">
    <molecule id="Q8BHT6-1"/>
    <property type="organism name" value="mouse"/>
</dbReference>
<dbReference type="UCSC" id="uc009aqd.1">
    <molecule id="Q8BHT6-2"/>
    <property type="organism name" value="mouse"/>
</dbReference>
<dbReference type="AGR" id="MGI:2685903"/>
<dbReference type="CTD" id="145173"/>
<dbReference type="MGI" id="MGI:2685903">
    <property type="gene designation" value="B3glct"/>
</dbReference>
<dbReference type="VEuPathDB" id="HostDB:ENSMUSG00000051950"/>
<dbReference type="eggNOG" id="KOG2246">
    <property type="taxonomic scope" value="Eukaryota"/>
</dbReference>
<dbReference type="GeneTree" id="ENSGT00940000155499"/>
<dbReference type="HOGENOM" id="CLU_030081_1_1_1"/>
<dbReference type="InParanoid" id="Q8BHT6"/>
<dbReference type="OMA" id="CATYPRF"/>
<dbReference type="OrthoDB" id="421979at2759"/>
<dbReference type="PhylomeDB" id="Q8BHT6"/>
<dbReference type="TreeFam" id="TF313496"/>
<dbReference type="Reactome" id="R-MMU-5173214">
    <property type="pathway name" value="O-glycosylation of TSR domain-containing proteins"/>
</dbReference>
<dbReference type="UniPathway" id="UPA00378"/>
<dbReference type="BioGRID-ORCS" id="381694">
    <property type="hits" value="3 hits in 79 CRISPR screens"/>
</dbReference>
<dbReference type="ChiTaRS" id="B3glct">
    <property type="organism name" value="mouse"/>
</dbReference>
<dbReference type="PRO" id="PR:Q8BHT6"/>
<dbReference type="Proteomes" id="UP000000589">
    <property type="component" value="Chromosome 5"/>
</dbReference>
<dbReference type="RNAct" id="Q8BHT6">
    <property type="molecule type" value="protein"/>
</dbReference>
<dbReference type="Bgee" id="ENSMUSG00000051950">
    <property type="expression patterns" value="Expressed in ciliary body and 221 other cell types or tissues"/>
</dbReference>
<dbReference type="GO" id="GO:0005789">
    <property type="term" value="C:endoplasmic reticulum membrane"/>
    <property type="evidence" value="ECO:0000315"/>
    <property type="project" value="MGI"/>
</dbReference>
<dbReference type="GO" id="GO:0016757">
    <property type="term" value="F:glycosyltransferase activity"/>
    <property type="evidence" value="ECO:0000314"/>
    <property type="project" value="MGI"/>
</dbReference>
<dbReference type="GO" id="GO:0007420">
    <property type="term" value="P:brain development"/>
    <property type="evidence" value="ECO:0000315"/>
    <property type="project" value="MGI"/>
</dbReference>
<dbReference type="GO" id="GO:0043010">
    <property type="term" value="P:camera-type eye development"/>
    <property type="evidence" value="ECO:0000315"/>
    <property type="project" value="MGI"/>
</dbReference>
<dbReference type="GO" id="GO:0060271">
    <property type="term" value="P:cilium assembly"/>
    <property type="evidence" value="ECO:0000315"/>
    <property type="project" value="MGI"/>
</dbReference>
<dbReference type="GO" id="GO:0044782">
    <property type="term" value="P:cilium organization"/>
    <property type="evidence" value="ECO:0000315"/>
    <property type="project" value="MGI"/>
</dbReference>
<dbReference type="GO" id="GO:1904888">
    <property type="term" value="P:cranial skeletal system development"/>
    <property type="evidence" value="ECO:0000315"/>
    <property type="project" value="MGI"/>
</dbReference>
<dbReference type="GO" id="GO:0006004">
    <property type="term" value="P:fucose metabolic process"/>
    <property type="evidence" value="ECO:0007669"/>
    <property type="project" value="UniProtKB-KW"/>
</dbReference>
<dbReference type="GO" id="GO:0010467">
    <property type="term" value="P:gene expression"/>
    <property type="evidence" value="ECO:0000315"/>
    <property type="project" value="MGI"/>
</dbReference>
<dbReference type="GO" id="GO:0060173">
    <property type="term" value="P:limb development"/>
    <property type="evidence" value="ECO:0000315"/>
    <property type="project" value="MGI"/>
</dbReference>
<dbReference type="GO" id="GO:0036066">
    <property type="term" value="P:protein O-linked fucosylation"/>
    <property type="evidence" value="ECO:0000314"/>
    <property type="project" value="MGI"/>
</dbReference>
<dbReference type="GO" id="GO:0009306">
    <property type="term" value="P:protein secretion"/>
    <property type="evidence" value="ECO:0000315"/>
    <property type="project" value="MGI"/>
</dbReference>
<dbReference type="GO" id="GO:0060021">
    <property type="term" value="P:roof of mouth development"/>
    <property type="evidence" value="ECO:0000315"/>
    <property type="project" value="MGI"/>
</dbReference>
<dbReference type="GO" id="GO:0001501">
    <property type="term" value="P:skeletal system development"/>
    <property type="evidence" value="ECO:0000315"/>
    <property type="project" value="MGI"/>
</dbReference>
<dbReference type="FunFam" id="3.90.550.50:FF:000021">
    <property type="entry name" value="Beta 3-glucosyltransferase"/>
    <property type="match status" value="1"/>
</dbReference>
<dbReference type="FunFam" id="3.90.550.50:FF:000008">
    <property type="entry name" value="Beta-1,3-glucosyltransferase"/>
    <property type="match status" value="1"/>
</dbReference>
<dbReference type="Gene3D" id="3.90.550.50">
    <property type="match status" value="2"/>
</dbReference>
<dbReference type="InterPro" id="IPR003378">
    <property type="entry name" value="Fringe-like_glycosylTrfase"/>
</dbReference>
<dbReference type="InterPro" id="IPR029044">
    <property type="entry name" value="Nucleotide-diphossugar_trans"/>
</dbReference>
<dbReference type="PANTHER" id="PTHR10811">
    <property type="entry name" value="FRINGE-RELATED"/>
    <property type="match status" value="1"/>
</dbReference>
<dbReference type="Pfam" id="PF02434">
    <property type="entry name" value="Fringe"/>
    <property type="match status" value="2"/>
</dbReference>
<dbReference type="SUPFAM" id="SSF53448">
    <property type="entry name" value="Nucleotide-diphospho-sugar transferases"/>
    <property type="match status" value="1"/>
</dbReference>
<dbReference type="PROSITE" id="PS00014">
    <property type="entry name" value="ER_TARGET"/>
    <property type="match status" value="1"/>
</dbReference>
<sequence>MRPPALLALFSCSAAFALMSEEIKEKVTPSQDLRQSSLPGRHDIDLKEIVFVIQSQSNSFHAKRAEQLKKNILKQAANLTQDLPRVLLLHQLAKQEGAWTILPLLPHFSVTYSKNSAWIFFCEEETRLQIPRLLDTLRRYDPSKEWFLGKALYDEESTIIHHYAFSENPTVFKYPDFAAGWALSIPLVNKLAKRLKSEALKSDFTIDLKHEIALYIWDKGGGPALTPVPEFCTEDVDPRCVTTFHSFLPLCGVPVKKEEIFVAVKTCKKFHADRIPIVKKTWAAQASLIEYYSDYAETAIPTVDLGIPNTDRGHCGKTFAILEKFLNHSHNKISWLVIVDDDTLISISRLRHLLSCYDSSDPVFLGERYGYGLGTGGYSYVTGGGGMVFSREAIRRLLVSSCRCYSNDAPDDMVLGMCFSGLGVPVTHSPLFHQARPVDYPKDYLAHQIPVSFHKHWHIDPVKVYLTWLAPSEEDQATQETQKDPREEL</sequence>
<accession>Q8BHT6</accession>
<accession>E9QMK8</accession>
<accession>Q0PCR7</accession>
<accession>Q149S5</accession>